<sequence length="185" mass="19879">MYTRKTLETEIAVELRRGGALQVETPIPFLTHMVETLLKYAGLGGSVAARELRRLDDGHHVIEDVAIALGRALDALLGERKGIARFGWAAVPMDDSFALAAVDLGGRPYWAVKAKLPDVSIGGYPLRMFPHFVRTLAAEAKATVHIYARGADPHHKVEAAHKALGLALRQAMAPGESPSTKGVLG</sequence>
<reference key="1">
    <citation type="submission" date="2007-04" db="EMBL/GenBank/DDBJ databases">
        <title>Complete sequence of Pyrobaculum arsenaticum DSM 13514.</title>
        <authorList>
            <consortium name="US DOE Joint Genome Institute"/>
            <person name="Copeland A."/>
            <person name="Lucas S."/>
            <person name="Lapidus A."/>
            <person name="Barry K."/>
            <person name="Glavina del Rio T."/>
            <person name="Dalin E."/>
            <person name="Tice H."/>
            <person name="Pitluck S."/>
            <person name="Chain P."/>
            <person name="Malfatti S."/>
            <person name="Shin M."/>
            <person name="Vergez L."/>
            <person name="Schmutz J."/>
            <person name="Larimer F."/>
            <person name="Land M."/>
            <person name="Hauser L."/>
            <person name="Kyrpides N."/>
            <person name="Mikhailova N."/>
            <person name="Cozen A.E."/>
            <person name="Fitz-Gibbon S.T."/>
            <person name="House C.H."/>
            <person name="Saltikov C."/>
            <person name="Lowe T.M."/>
            <person name="Richardson P."/>
        </authorList>
    </citation>
    <scope>NUCLEOTIDE SEQUENCE [LARGE SCALE GENOMIC DNA]</scope>
    <source>
        <strain>ATCC 700994 / DSM 13514 / JCM 11321 / PZ6</strain>
    </source>
</reference>
<organism>
    <name type="scientific">Pyrobaculum arsenaticum (strain DSM 13514 / JCM 11321 / PZ6)</name>
    <dbReference type="NCBI Taxonomy" id="340102"/>
    <lineage>
        <taxon>Archaea</taxon>
        <taxon>Thermoproteota</taxon>
        <taxon>Thermoprotei</taxon>
        <taxon>Thermoproteales</taxon>
        <taxon>Thermoproteaceae</taxon>
        <taxon>Pyrobaculum</taxon>
    </lineage>
</organism>
<proteinExistence type="inferred from homology"/>
<dbReference type="EC" id="4.2.1.19" evidence="1"/>
<dbReference type="EMBL" id="CP000660">
    <property type="protein sequence ID" value="ABP49785.1"/>
    <property type="molecule type" value="Genomic_DNA"/>
</dbReference>
<dbReference type="SMR" id="A4WHB8"/>
<dbReference type="STRING" id="340102.Pars_0170"/>
<dbReference type="KEGG" id="pas:Pars_0170"/>
<dbReference type="HOGENOM" id="CLU_044308_2_0_2"/>
<dbReference type="OrthoDB" id="103579at2157"/>
<dbReference type="PhylomeDB" id="A4WHB8"/>
<dbReference type="UniPathway" id="UPA00031">
    <property type="reaction ID" value="UER00011"/>
</dbReference>
<dbReference type="Proteomes" id="UP000001567">
    <property type="component" value="Chromosome"/>
</dbReference>
<dbReference type="GO" id="GO:0005737">
    <property type="term" value="C:cytoplasm"/>
    <property type="evidence" value="ECO:0007669"/>
    <property type="project" value="UniProtKB-SubCell"/>
</dbReference>
<dbReference type="GO" id="GO:0004424">
    <property type="term" value="F:imidazoleglycerol-phosphate dehydratase activity"/>
    <property type="evidence" value="ECO:0007669"/>
    <property type="project" value="UniProtKB-UniRule"/>
</dbReference>
<dbReference type="GO" id="GO:0000105">
    <property type="term" value="P:L-histidine biosynthetic process"/>
    <property type="evidence" value="ECO:0007669"/>
    <property type="project" value="UniProtKB-UniRule"/>
</dbReference>
<dbReference type="FunFam" id="3.30.230.40:FF:000001">
    <property type="entry name" value="Imidazoleglycerol-phosphate dehydratase HisB"/>
    <property type="match status" value="1"/>
</dbReference>
<dbReference type="FunFam" id="3.30.230.40:FF:000003">
    <property type="entry name" value="Imidazoleglycerol-phosphate dehydratase HisB"/>
    <property type="match status" value="1"/>
</dbReference>
<dbReference type="Gene3D" id="3.30.230.40">
    <property type="entry name" value="Imidazole glycerol phosphate dehydratase, domain 1"/>
    <property type="match status" value="2"/>
</dbReference>
<dbReference type="HAMAP" id="MF_00076">
    <property type="entry name" value="HisB"/>
    <property type="match status" value="1"/>
</dbReference>
<dbReference type="InterPro" id="IPR038494">
    <property type="entry name" value="IGPD_sf"/>
</dbReference>
<dbReference type="InterPro" id="IPR000807">
    <property type="entry name" value="ImidazoleglycerolP_deHydtase"/>
</dbReference>
<dbReference type="InterPro" id="IPR020565">
    <property type="entry name" value="ImidazoleglycerP_deHydtase_CS"/>
</dbReference>
<dbReference type="InterPro" id="IPR020568">
    <property type="entry name" value="Ribosomal_Su5_D2-typ_SF"/>
</dbReference>
<dbReference type="PANTHER" id="PTHR23133:SF2">
    <property type="entry name" value="IMIDAZOLEGLYCEROL-PHOSPHATE DEHYDRATASE"/>
    <property type="match status" value="1"/>
</dbReference>
<dbReference type="PANTHER" id="PTHR23133">
    <property type="entry name" value="IMIDAZOLEGLYCEROL-PHOSPHATE DEHYDRATASE HIS7"/>
    <property type="match status" value="1"/>
</dbReference>
<dbReference type="Pfam" id="PF00475">
    <property type="entry name" value="IGPD"/>
    <property type="match status" value="1"/>
</dbReference>
<dbReference type="SUPFAM" id="SSF54211">
    <property type="entry name" value="Ribosomal protein S5 domain 2-like"/>
    <property type="match status" value="2"/>
</dbReference>
<dbReference type="PROSITE" id="PS00955">
    <property type="entry name" value="IGP_DEHYDRATASE_2"/>
    <property type="match status" value="1"/>
</dbReference>
<name>HIS7_PYRAR</name>
<keyword id="KW-0028">Amino-acid biosynthesis</keyword>
<keyword id="KW-0963">Cytoplasm</keyword>
<keyword id="KW-0368">Histidine biosynthesis</keyword>
<keyword id="KW-0456">Lyase</keyword>
<accession>A4WHB8</accession>
<comment type="catalytic activity">
    <reaction evidence="1">
        <text>D-erythro-1-(imidazol-4-yl)glycerol 3-phosphate = 3-(imidazol-4-yl)-2-oxopropyl phosphate + H2O</text>
        <dbReference type="Rhea" id="RHEA:11040"/>
        <dbReference type="ChEBI" id="CHEBI:15377"/>
        <dbReference type="ChEBI" id="CHEBI:57766"/>
        <dbReference type="ChEBI" id="CHEBI:58278"/>
        <dbReference type="EC" id="4.2.1.19"/>
    </reaction>
</comment>
<comment type="pathway">
    <text evidence="1">Amino-acid biosynthesis; L-histidine biosynthesis; L-histidine from 5-phospho-alpha-D-ribose 1-diphosphate: step 6/9.</text>
</comment>
<comment type="subcellular location">
    <subcellularLocation>
        <location evidence="1">Cytoplasm</location>
    </subcellularLocation>
</comment>
<comment type="similarity">
    <text evidence="1">Belongs to the imidazoleglycerol-phosphate dehydratase family.</text>
</comment>
<evidence type="ECO:0000255" key="1">
    <source>
        <dbReference type="HAMAP-Rule" id="MF_00076"/>
    </source>
</evidence>
<feature type="chain" id="PRO_0000336365" description="Imidazoleglycerol-phosphate dehydratase">
    <location>
        <begin position="1"/>
        <end position="185"/>
    </location>
</feature>
<gene>
    <name evidence="1" type="primary">hisB</name>
    <name type="ordered locus">Pars_0170</name>
</gene>
<protein>
    <recommendedName>
        <fullName evidence="1">Imidazoleglycerol-phosphate dehydratase</fullName>
        <shortName evidence="1">IGPD</shortName>
        <ecNumber evidence="1">4.2.1.19</ecNumber>
    </recommendedName>
</protein>